<accession>P9WEJ8</accession>
<protein>
    <recommendedName>
        <fullName evidence="3">Arginine-containing cyclodipeptide synthase pthA</fullName>
        <shortName evidence="3">RCDPS pthA</shortName>
        <ecNumber evidence="2">6.3.2.-</ecNumber>
    </recommendedName>
</protein>
<sequence length="530" mass="59930">MSTLYLLANLRNRPDGRHSIDFGSLSARESDPVKMPHEITGLFSSDYCSSTSTTLEAEESEAYSKALSRNKRAAGILEHFLNGEQAAAHPSVCLQDRARLRLCEEAILVGAPRGTATRAREGIASYDKMEFLFPGSRQRKSIQMLHVSCPSLQPGATLLDSHSGSVHDSITILSGMCLFTRKILNSTTTNGRLDGQKLRHMPPTLYEMECIARLSAIIADVTTLTQSNFGEDNHPAVNIVLDLPSWHYYQFIEDCIKSDTCSLEEAIDWTEAIKLRRQQLASVLKKAVWHELGQRQVAHKSTLKAIQISPESTVVDELIKETLQRGHQPRLDDILHALSGTPHSLWPQFYSLLRDRDKPHSIRDLGFLFYVFQVVRPALLKAIPCQEAPSSKAPACEQPNLHRGQRQCLPQRPLIISLDDRAERKIYSQAHSLLLRLSRSSNQLVNPTLVQLYMPRRVYIDGNKDGQRLYWHDPSPVLPLLEGTKEQQRRDARNHDHHRRELQQTDILTELYGRDCSANIQGWFKEAGLC</sequence>
<proteinExistence type="evidence at protein level"/>
<dbReference type="EC" id="6.3.2.-" evidence="2"/>
<dbReference type="EMBL" id="OP622862">
    <property type="protein sequence ID" value="WCB22921.1"/>
    <property type="molecule type" value="mRNA"/>
</dbReference>
<dbReference type="GO" id="GO:0016874">
    <property type="term" value="F:ligase activity"/>
    <property type="evidence" value="ECO:0007669"/>
    <property type="project" value="UniProtKB-KW"/>
</dbReference>
<gene>
    <name evidence="3" type="primary">pthA</name>
</gene>
<organism>
    <name type="scientific">Penicillium thymicola</name>
    <dbReference type="NCBI Taxonomy" id="293382"/>
    <lineage>
        <taxon>Eukaryota</taxon>
        <taxon>Fungi</taxon>
        <taxon>Dikarya</taxon>
        <taxon>Ascomycota</taxon>
        <taxon>Pezizomycotina</taxon>
        <taxon>Eurotiomycetes</taxon>
        <taxon>Eurotiomycetidae</taxon>
        <taxon>Eurotiales</taxon>
        <taxon>Aspergillaceae</taxon>
        <taxon>Penicillium</taxon>
    </lineage>
</organism>
<name>PTHA_PENTH</name>
<comment type="function">
    <text evidence="2 5">Arginine-containing cyclodipeptide synthase; part of the cluster that mediates the biosynthesis of a highly modified cyclo-arginine-aspartate dipeptide (cRD) (PubMed:36702957). Within the pathway, pthA acts as the scaffold-generating enzyme and is responsible for formation of the cyclo-Arg-Asp diketopiperazine (cRW) from L-arginyl-tRNA(Arg) + L-aspartyl-tRNA(Asp) (PubMed:36702957). Additional enzymes from the cluster then further modify the cyclo-Arg-Asp diketopiperazine (cRW) scaffold (Probable).</text>
</comment>
<comment type="catalytic activity">
    <reaction evidence="2">
        <text>L-aspartyl-tRNA(Asp) + L-arginyl-tRNA(Arg) = cyclo(L-arginyl-L-aspartyl) + tRNA(Asp) + tRNA(Arg) + 2 H(+)</text>
        <dbReference type="Rhea" id="RHEA:80415"/>
        <dbReference type="Rhea" id="RHEA-COMP:9658"/>
        <dbReference type="Rhea" id="RHEA-COMP:9660"/>
        <dbReference type="Rhea" id="RHEA-COMP:9673"/>
        <dbReference type="Rhea" id="RHEA-COMP:9678"/>
        <dbReference type="ChEBI" id="CHEBI:15378"/>
        <dbReference type="ChEBI" id="CHEBI:78442"/>
        <dbReference type="ChEBI" id="CHEBI:78513"/>
        <dbReference type="ChEBI" id="CHEBI:78516"/>
        <dbReference type="ChEBI" id="CHEBI:231489"/>
    </reaction>
    <physiologicalReaction direction="left-to-right" evidence="2">
        <dbReference type="Rhea" id="RHEA:80416"/>
    </physiologicalReaction>
</comment>
<comment type="pathway">
    <text evidence="2">Secondary metabolite biosynthesis.</text>
</comment>
<comment type="domain">
    <text evidence="1">The conserved DDXXE motif is essential for catalytic activity.</text>
</comment>
<comment type="similarity">
    <text evidence="4">Belongs to the arginine-containing cyclodipeptide synthase family.</text>
</comment>
<keyword id="KW-0436">Ligase</keyword>
<reference key="1">
    <citation type="journal article" date="2023" name="Nat. Chem. Biol.">
        <title>Genome mining for unknown-unknown natural products.</title>
        <authorList>
            <person name="Yee D.A."/>
            <person name="Niwa K."/>
            <person name="Perlatti B."/>
            <person name="Chen M."/>
            <person name="Li Y."/>
            <person name="Tang Y."/>
        </authorList>
    </citation>
    <scope>NUCLEOTIDE SEQUENCE [MRNA]</scope>
    <scope>FUNCTION</scope>
    <scope>CATALYTIC ACTIVITY</scope>
    <scope>PATHWAY</scope>
</reference>
<evidence type="ECO:0000250" key="1">
    <source>
        <dbReference type="UniProtKB" id="P9WEJ7"/>
    </source>
</evidence>
<evidence type="ECO:0000269" key="2">
    <source>
    </source>
</evidence>
<evidence type="ECO:0000303" key="3">
    <source>
    </source>
</evidence>
<evidence type="ECO:0000305" key="4"/>
<evidence type="ECO:0000305" key="5">
    <source>
    </source>
</evidence>
<feature type="chain" id="PRO_0000461003" description="Arginine-containing cyclodipeptide synthase pthA">
    <location>
        <begin position="1"/>
        <end position="530"/>
    </location>
</feature>
<feature type="short sequence motif" description="Conserved DDXXE motif" evidence="1">
    <location>
        <begin position="419"/>
        <end position="423"/>
    </location>
</feature>